<organism>
    <name type="scientific">Saccharopolyspora erythraea (strain ATCC 11635 / DSM 40517 / JCM 4748 / NBRC 13426 / NCIMB 8594 / NRRL 2338)</name>
    <dbReference type="NCBI Taxonomy" id="405948"/>
    <lineage>
        <taxon>Bacteria</taxon>
        <taxon>Bacillati</taxon>
        <taxon>Actinomycetota</taxon>
        <taxon>Actinomycetes</taxon>
        <taxon>Pseudonocardiales</taxon>
        <taxon>Pseudonocardiaceae</taxon>
        <taxon>Saccharopolyspora</taxon>
    </lineage>
</organism>
<gene>
    <name evidence="1" type="primary">leuS</name>
    <name type="ordered locus">SACE_7373</name>
</gene>
<evidence type="ECO:0000255" key="1">
    <source>
        <dbReference type="HAMAP-Rule" id="MF_00049"/>
    </source>
</evidence>
<feature type="chain" id="PRO_0000334809" description="Leucine--tRNA ligase">
    <location>
        <begin position="1"/>
        <end position="955"/>
    </location>
</feature>
<feature type="short sequence motif" description="'HIGH' region">
    <location>
        <begin position="66"/>
        <end position="77"/>
    </location>
</feature>
<feature type="short sequence motif" description="'KMSKS' region">
    <location>
        <begin position="725"/>
        <end position="729"/>
    </location>
</feature>
<feature type="binding site" evidence="1">
    <location>
        <position position="728"/>
    </location>
    <ligand>
        <name>ATP</name>
        <dbReference type="ChEBI" id="CHEBI:30616"/>
    </ligand>
</feature>
<protein>
    <recommendedName>
        <fullName evidence="1">Leucine--tRNA ligase</fullName>
        <ecNumber evidence="1">6.1.1.4</ecNumber>
    </recommendedName>
    <alternativeName>
        <fullName evidence="1">Leucyl-tRNA synthetase</fullName>
        <shortName evidence="1">LeuRS</shortName>
    </alternativeName>
</protein>
<name>SYL_SACEN</name>
<keyword id="KW-0030">Aminoacyl-tRNA synthetase</keyword>
<keyword id="KW-0067">ATP-binding</keyword>
<keyword id="KW-0963">Cytoplasm</keyword>
<keyword id="KW-0436">Ligase</keyword>
<keyword id="KW-0547">Nucleotide-binding</keyword>
<keyword id="KW-0648">Protein biosynthesis</keyword>
<keyword id="KW-1185">Reference proteome</keyword>
<proteinExistence type="inferred from homology"/>
<sequence>MSGQAEGSTNTEEVPRFRYTAQTAAEIEQRWQRRWEELGTFHAPNPAGSLKGEVSDEKLFVQDMFPYPSGSGLHVGHPLGFIGTDVYARFNRMLGKNVLHTMGFDSFGLPAEQYAVQTGTHPRTTTEKNIERYLTQIRRLGLGHDERRRVATTDIPFYRWTQWIFLQIFHSWYDTDADRARPISELEAQFAAGERATPDGRPWAELSRTEQRRIIDSYRLVYLSEAPVNWAPGLGTVVANEEVTADGLTERGNFPVFRRNLKQWMMRITAYADRLIDDLDRLDWPDKIKTMQRNWIGRSQGANVVFPLDGSAGSIEVFTTRPDTLFGVTYLVLAPEHPLVDELTAAQWPQDPDLRWTGGAATPAEAVAQYRRAASMKSDLDRQENKEKTGVFTGAWATNPVNGEQVPVFIADYVLMGYGTGAIMAVPGEDQRDFDFAEAFGLPVVRTVQPSEGFEGGAYSGEGPRINSANPDVGLDLNGMHLDEAKKTIIEWLESHKHGSGTVQYKLRDWLFARQRYWGEPFPVVYDSDGIPLGLPESELPVVLPEVADYSPRTFDPEDADSRPEPPLAKATEWANVELDLGDGLKNYERDTNVMPQWAGSCWYQLRYIDPDNDQAFVDPANERYWMGKRPELHGPDDPGGLDLYIGGVEHGVLHLLYSRFWHKVLYDLGHVSSEEPYRRLYNQGYIQAYAYTDSRGVYVPAEEVEERDGKFFFQGEEVRREYGKMGKSLKNSVSPDEMADAYGADTLRLYEMAMGPLDASRPWATKDVVGSHRFLQRLWRNVVDENTGELRVTDDEPAIEVLRALHKTIAGVREDYRELRFNTAVAKLIELNNLLTKEYSATGAPRAVVGPLVLMVAPLAPHMAEELWSKLGHDGSLAHGPFPEADEQYLVEDTVEYPIQFNGKVRSRIVVPASAGQDEVKAAALADEKVVAALDGREPRKVIVVPGRLVNVVG</sequence>
<comment type="catalytic activity">
    <reaction evidence="1">
        <text>tRNA(Leu) + L-leucine + ATP = L-leucyl-tRNA(Leu) + AMP + diphosphate</text>
        <dbReference type="Rhea" id="RHEA:11688"/>
        <dbReference type="Rhea" id="RHEA-COMP:9613"/>
        <dbReference type="Rhea" id="RHEA-COMP:9622"/>
        <dbReference type="ChEBI" id="CHEBI:30616"/>
        <dbReference type="ChEBI" id="CHEBI:33019"/>
        <dbReference type="ChEBI" id="CHEBI:57427"/>
        <dbReference type="ChEBI" id="CHEBI:78442"/>
        <dbReference type="ChEBI" id="CHEBI:78494"/>
        <dbReference type="ChEBI" id="CHEBI:456215"/>
        <dbReference type="EC" id="6.1.1.4"/>
    </reaction>
</comment>
<comment type="subcellular location">
    <subcellularLocation>
        <location evidence="1">Cytoplasm</location>
    </subcellularLocation>
</comment>
<comment type="similarity">
    <text evidence="1">Belongs to the class-I aminoacyl-tRNA synthetase family.</text>
</comment>
<accession>A4FR54</accession>
<dbReference type="EC" id="6.1.1.4" evidence="1"/>
<dbReference type="EMBL" id="AM420293">
    <property type="protein sequence ID" value="CAM06529.1"/>
    <property type="molecule type" value="Genomic_DNA"/>
</dbReference>
<dbReference type="RefSeq" id="WP_009945755.1">
    <property type="nucleotide sequence ID" value="NC_009142.1"/>
</dbReference>
<dbReference type="SMR" id="A4FR54"/>
<dbReference type="STRING" id="405948.SACE_7373"/>
<dbReference type="KEGG" id="sen:SACE_7373"/>
<dbReference type="eggNOG" id="COG0495">
    <property type="taxonomic scope" value="Bacteria"/>
</dbReference>
<dbReference type="HOGENOM" id="CLU_004427_0_0_11"/>
<dbReference type="OrthoDB" id="9810365at2"/>
<dbReference type="Proteomes" id="UP000006728">
    <property type="component" value="Chromosome"/>
</dbReference>
<dbReference type="GO" id="GO:0005829">
    <property type="term" value="C:cytosol"/>
    <property type="evidence" value="ECO:0007669"/>
    <property type="project" value="TreeGrafter"/>
</dbReference>
<dbReference type="GO" id="GO:0002161">
    <property type="term" value="F:aminoacyl-tRNA deacylase activity"/>
    <property type="evidence" value="ECO:0007669"/>
    <property type="project" value="InterPro"/>
</dbReference>
<dbReference type="GO" id="GO:0005524">
    <property type="term" value="F:ATP binding"/>
    <property type="evidence" value="ECO:0007669"/>
    <property type="project" value="UniProtKB-UniRule"/>
</dbReference>
<dbReference type="GO" id="GO:0004823">
    <property type="term" value="F:leucine-tRNA ligase activity"/>
    <property type="evidence" value="ECO:0007669"/>
    <property type="project" value="UniProtKB-UniRule"/>
</dbReference>
<dbReference type="GO" id="GO:0006429">
    <property type="term" value="P:leucyl-tRNA aminoacylation"/>
    <property type="evidence" value="ECO:0007669"/>
    <property type="project" value="UniProtKB-UniRule"/>
</dbReference>
<dbReference type="CDD" id="cd07958">
    <property type="entry name" value="Anticodon_Ia_Leu_BEm"/>
    <property type="match status" value="1"/>
</dbReference>
<dbReference type="FunFam" id="3.40.50.620:FF:000056">
    <property type="entry name" value="Leucine--tRNA ligase"/>
    <property type="match status" value="1"/>
</dbReference>
<dbReference type="FunFam" id="3.40.50.620:FF:000060">
    <property type="entry name" value="Leucine--tRNA ligase"/>
    <property type="match status" value="1"/>
</dbReference>
<dbReference type="FunFam" id="3.40.50.620:FF:000087">
    <property type="entry name" value="Leucine--tRNA ligase"/>
    <property type="match status" value="1"/>
</dbReference>
<dbReference type="FunFam" id="3.90.740.10:FF:000017">
    <property type="entry name" value="Leucine--tRNA ligase"/>
    <property type="match status" value="1"/>
</dbReference>
<dbReference type="FunFam" id="1.10.730.10:FF:000011">
    <property type="entry name" value="Leucine--tRNA ligase chloroplastic/mitochondrial"/>
    <property type="match status" value="1"/>
</dbReference>
<dbReference type="Gene3D" id="3.40.50.620">
    <property type="entry name" value="HUPs"/>
    <property type="match status" value="2"/>
</dbReference>
<dbReference type="Gene3D" id="1.10.730.10">
    <property type="entry name" value="Isoleucyl-tRNA Synthetase, Domain 1"/>
    <property type="match status" value="1"/>
</dbReference>
<dbReference type="Gene3D" id="3.90.740.10">
    <property type="entry name" value="Valyl/Leucyl/Isoleucyl-tRNA synthetase, editing domain"/>
    <property type="match status" value="1"/>
</dbReference>
<dbReference type="HAMAP" id="MF_00049_B">
    <property type="entry name" value="Leu_tRNA_synth_B"/>
    <property type="match status" value="1"/>
</dbReference>
<dbReference type="InterPro" id="IPR002302">
    <property type="entry name" value="Leu-tRNA-ligase"/>
</dbReference>
<dbReference type="InterPro" id="IPR025709">
    <property type="entry name" value="Leu_tRNA-synth_edit"/>
</dbReference>
<dbReference type="InterPro" id="IPR013155">
    <property type="entry name" value="M/V/L/I-tRNA-synth_anticd-bd"/>
</dbReference>
<dbReference type="InterPro" id="IPR015413">
    <property type="entry name" value="Methionyl/Leucyl_tRNA_Synth"/>
</dbReference>
<dbReference type="InterPro" id="IPR014729">
    <property type="entry name" value="Rossmann-like_a/b/a_fold"/>
</dbReference>
<dbReference type="InterPro" id="IPR009080">
    <property type="entry name" value="tRNAsynth_Ia_anticodon-bd"/>
</dbReference>
<dbReference type="InterPro" id="IPR009008">
    <property type="entry name" value="Val/Leu/Ile-tRNA-synth_edit"/>
</dbReference>
<dbReference type="NCBIfam" id="TIGR00396">
    <property type="entry name" value="leuS_bact"/>
    <property type="match status" value="1"/>
</dbReference>
<dbReference type="PANTHER" id="PTHR43740:SF2">
    <property type="entry name" value="LEUCINE--TRNA LIGASE, MITOCHONDRIAL"/>
    <property type="match status" value="1"/>
</dbReference>
<dbReference type="PANTHER" id="PTHR43740">
    <property type="entry name" value="LEUCYL-TRNA SYNTHETASE"/>
    <property type="match status" value="1"/>
</dbReference>
<dbReference type="Pfam" id="PF08264">
    <property type="entry name" value="Anticodon_1"/>
    <property type="match status" value="1"/>
</dbReference>
<dbReference type="Pfam" id="PF13603">
    <property type="entry name" value="tRNA-synt_1_2"/>
    <property type="match status" value="1"/>
</dbReference>
<dbReference type="Pfam" id="PF09334">
    <property type="entry name" value="tRNA-synt_1g"/>
    <property type="match status" value="1"/>
</dbReference>
<dbReference type="PRINTS" id="PR00985">
    <property type="entry name" value="TRNASYNTHLEU"/>
</dbReference>
<dbReference type="SUPFAM" id="SSF47323">
    <property type="entry name" value="Anticodon-binding domain of a subclass of class I aminoacyl-tRNA synthetases"/>
    <property type="match status" value="1"/>
</dbReference>
<dbReference type="SUPFAM" id="SSF52374">
    <property type="entry name" value="Nucleotidylyl transferase"/>
    <property type="match status" value="1"/>
</dbReference>
<dbReference type="SUPFAM" id="SSF50677">
    <property type="entry name" value="ValRS/IleRS/LeuRS editing domain"/>
    <property type="match status" value="1"/>
</dbReference>
<reference key="1">
    <citation type="journal article" date="2007" name="Nat. Biotechnol.">
        <title>Complete genome sequence of the erythromycin-producing bacterium Saccharopolyspora erythraea NRRL23338.</title>
        <authorList>
            <person name="Oliynyk M."/>
            <person name="Samborskyy M."/>
            <person name="Lester J.B."/>
            <person name="Mironenko T."/>
            <person name="Scott N."/>
            <person name="Dickens S."/>
            <person name="Haydock S.F."/>
            <person name="Leadlay P.F."/>
        </authorList>
    </citation>
    <scope>NUCLEOTIDE SEQUENCE [LARGE SCALE GENOMIC DNA]</scope>
    <source>
        <strain>ATCC 11635 / DSM 40517 / JCM 4748 / NBRC 13426 / NCIMB 8594 / NRRL 2338</strain>
    </source>
</reference>